<keyword id="KW-0349">Heme</keyword>
<keyword id="KW-0408">Iron</keyword>
<keyword id="KW-0472">Membrane</keyword>
<keyword id="KW-0479">Metal-binding</keyword>
<keyword id="KW-0503">Monooxygenase</keyword>
<keyword id="KW-0560">Oxidoreductase</keyword>
<keyword id="KW-0812">Transmembrane</keyword>
<keyword id="KW-1133">Transmembrane helix</keyword>
<accession>P43083</accession>
<evidence type="ECO:0000250" key="1"/>
<evidence type="ECO:0000255" key="2"/>
<evidence type="ECO:0000305" key="3"/>
<proteinExistence type="inferred from homology"/>
<comment type="function">
    <text>Together with an NADPH cytochrome P450 the enzyme system catalyzes the terminal hydroxylation as the first step in the assimilation of alkanes and fatty acids.</text>
</comment>
<comment type="cofactor">
    <cofactor evidence="1">
        <name>heme</name>
        <dbReference type="ChEBI" id="CHEBI:30413"/>
    </cofactor>
</comment>
<comment type="subcellular location">
    <subcellularLocation>
        <location evidence="3">Membrane</location>
    </subcellularLocation>
    <subcellularLocation>
        <location>Membrane</location>
        <topology>Multi-pass membrane protein</topology>
    </subcellularLocation>
</comment>
<comment type="similarity">
    <text evidence="3">Belongs to the cytochrome P450 family.</text>
</comment>
<dbReference type="EC" id="1.14.14.-"/>
<dbReference type="EMBL" id="X76225">
    <property type="protein sequence ID" value="CAA53811.1"/>
    <property type="molecule type" value="Genomic_DNA"/>
</dbReference>
<dbReference type="PIR" id="S69988">
    <property type="entry name" value="S69988"/>
</dbReference>
<dbReference type="SMR" id="P43083"/>
<dbReference type="GO" id="GO:0016020">
    <property type="term" value="C:membrane"/>
    <property type="evidence" value="ECO:0007669"/>
    <property type="project" value="UniProtKB-SubCell"/>
</dbReference>
<dbReference type="GO" id="GO:0020037">
    <property type="term" value="F:heme binding"/>
    <property type="evidence" value="ECO:0007669"/>
    <property type="project" value="InterPro"/>
</dbReference>
<dbReference type="GO" id="GO:0005506">
    <property type="term" value="F:iron ion binding"/>
    <property type="evidence" value="ECO:0007669"/>
    <property type="project" value="InterPro"/>
</dbReference>
<dbReference type="GO" id="GO:0016712">
    <property type="term" value="F:oxidoreductase activity, acting on paired donors, with incorporation or reduction of molecular oxygen, reduced flavin or flavoprotein as one donor, and incorporation of one atom of oxygen"/>
    <property type="evidence" value="ECO:0007669"/>
    <property type="project" value="InterPro"/>
</dbReference>
<dbReference type="CDD" id="cd11063">
    <property type="entry name" value="CYP52"/>
    <property type="match status" value="1"/>
</dbReference>
<dbReference type="Gene3D" id="1.10.630.10">
    <property type="entry name" value="Cytochrome P450"/>
    <property type="match status" value="1"/>
</dbReference>
<dbReference type="InterPro" id="IPR001128">
    <property type="entry name" value="Cyt_P450"/>
</dbReference>
<dbReference type="InterPro" id="IPR017972">
    <property type="entry name" value="Cyt_P450_CS"/>
</dbReference>
<dbReference type="InterPro" id="IPR002974">
    <property type="entry name" value="Cyt_P450_E_CYP52_ascomycetes"/>
</dbReference>
<dbReference type="InterPro" id="IPR047146">
    <property type="entry name" value="Cyt_P450_E_CYP52_fungi"/>
</dbReference>
<dbReference type="InterPro" id="IPR002402">
    <property type="entry name" value="Cyt_P450_E_grp-II"/>
</dbReference>
<dbReference type="InterPro" id="IPR036396">
    <property type="entry name" value="Cyt_P450_sf"/>
</dbReference>
<dbReference type="PANTHER" id="PTHR24287">
    <property type="entry name" value="P450, PUTATIVE (EUROFUNG)-RELATED"/>
    <property type="match status" value="1"/>
</dbReference>
<dbReference type="PANTHER" id="PTHR24287:SF1">
    <property type="entry name" value="P450, PUTATIVE (EUROFUNG)-RELATED"/>
    <property type="match status" value="1"/>
</dbReference>
<dbReference type="Pfam" id="PF00067">
    <property type="entry name" value="p450"/>
    <property type="match status" value="1"/>
</dbReference>
<dbReference type="PRINTS" id="PR00464">
    <property type="entry name" value="EP450II"/>
</dbReference>
<dbReference type="PRINTS" id="PR01239">
    <property type="entry name" value="EP450IICYP52"/>
</dbReference>
<dbReference type="PRINTS" id="PR00385">
    <property type="entry name" value="P450"/>
</dbReference>
<dbReference type="SUPFAM" id="SSF48264">
    <property type="entry name" value="Cytochrome P450"/>
    <property type="match status" value="1"/>
</dbReference>
<dbReference type="PROSITE" id="PS00086">
    <property type="entry name" value="CYTOCHROME_P450"/>
    <property type="match status" value="1"/>
</dbReference>
<sequence length="519" mass="58656">MIIGLSDAFALGGIALSFLVAYQFIYFYFIYSPRAKKLGCAPPVIVFSFPLGLPALYKFATAMLHDNLLEYISIRIADMKVRTGFQTLAGQRWLVTLEPENIKTVLATSFKDYSLGFRYDIMYGLLGNGIFTLSGDGWKHSRALLRPQFSREQVSHLESMRTHINLMINNHFKGGQVVDAQALYHNLTIDTATEFLFGESTNTLDPDLAQQGLPGPKGLVTGEQFAEAFTSALEILSVRVIVGAAWFLIWTPKFWRSCKVCHNFIDYFVYKALATPMEKDQEADRYVFIRELTKETSDPRVIRDQALNILLAGRDTTAGLLSFITYYLGAYPEVYAELREAVLSEFGSTDVETPTFEQLKQCKVLQNVIREVLRLHPNVPLNFRQAIVDTKLPTGGGPNGDQPVFVPKGQNVFYSTYSMQRRTDIWGPDATTFRPDRWNEPREALASGWDYIPFNGGPRICLGQQFALTEASYTIVRICQEFSRIEVLHPDVITSKNSMKQRMRLTQTASGGVITRFIR</sequence>
<organism>
    <name type="scientific">Candida apicola</name>
    <name type="common">Yeast</name>
    <dbReference type="NCBI Taxonomy" id="29830"/>
    <lineage>
        <taxon>Eukaryota</taxon>
        <taxon>Fungi</taxon>
        <taxon>Dikarya</taxon>
        <taxon>Ascomycota</taxon>
        <taxon>Saccharomycotina</taxon>
        <taxon>Dipodascomycetes</taxon>
        <taxon>Dipodascales</taxon>
        <taxon>Trichomonascaceae</taxon>
        <taxon>Starmerella</taxon>
    </lineage>
</organism>
<reference key="1">
    <citation type="journal article" date="1996" name="Yeast">
        <title>Cytochromes P450 of the sophorose lipid-producing yeast Candida apicola: heterogeneity and polymerase chain reaction-mediated cloning of two genes.</title>
        <authorList>
            <person name="Lottermoser K."/>
            <person name="Schunck W.H."/>
            <person name="Asperger O."/>
        </authorList>
    </citation>
    <scope>NUCLEOTIDE SEQUENCE [GENOMIC DNA]</scope>
    <source>
        <strain>IMET 43747</strain>
    </source>
</reference>
<protein>
    <recommendedName>
        <fullName>Cytochrome P450 52E1</fullName>
        <ecNumber>1.14.14.-</ecNumber>
    </recommendedName>
    <alternativeName>
        <fullName>CYPLIIE1</fullName>
    </alternativeName>
</protein>
<gene>
    <name type="primary">CYP52E1</name>
</gene>
<feature type="chain" id="PRO_0000052036" description="Cytochrome P450 52E1">
    <location>
        <begin position="1"/>
        <end position="519"/>
    </location>
</feature>
<feature type="transmembrane region" description="Helical" evidence="2">
    <location>
        <begin position="10"/>
        <end position="30"/>
    </location>
</feature>
<feature type="transmembrane region" description="Helical" evidence="2">
    <location>
        <begin position="44"/>
        <end position="64"/>
    </location>
</feature>
<feature type="binding site" description="axial binding residue" evidence="1">
    <location>
        <position position="479"/>
    </location>
    <ligand>
        <name>heme</name>
        <dbReference type="ChEBI" id="CHEBI:30413"/>
    </ligand>
    <ligandPart>
        <name>Fe</name>
        <dbReference type="ChEBI" id="CHEBI:18248"/>
    </ligandPart>
</feature>
<name>CP52V_CANAP</name>